<name>RSMH_STRAW</name>
<sequence length="318" mass="34704">MSQSRHVPVMLQRCLDMLAPALTEPGAVVVDCTLGLGGHSEALLTQFPEARLVALDRDKEALRLSGERLAPFGDRATLVHAVYDELPDVLDRLGVPRVQGVLFDLGVSSMQLDEADRGFAYAQDAPLDMRMDQTTGISAAEVLNTYPPGEIVRILRAYGEEKQAKRIVSAIVREREKEPFSNSARLVELIRDSLPQAAKRTGGNPAKRTFQALRIEVNGELSVLERAIPAAVKALAVGGRIAVLSYHSLEDRLVKQVFAAGAATTAPPGLPVVPERYQPRLKLLTRGAELPTEEEIAENRRAAPARLRGAQRIREDAE</sequence>
<organism>
    <name type="scientific">Streptomyces avermitilis (strain ATCC 31267 / DSM 46492 / JCM 5070 / NBRC 14893 / NCIMB 12804 / NRRL 8165 / MA-4680)</name>
    <dbReference type="NCBI Taxonomy" id="227882"/>
    <lineage>
        <taxon>Bacteria</taxon>
        <taxon>Bacillati</taxon>
        <taxon>Actinomycetota</taxon>
        <taxon>Actinomycetes</taxon>
        <taxon>Kitasatosporales</taxon>
        <taxon>Streptomycetaceae</taxon>
        <taxon>Streptomyces</taxon>
    </lineage>
</organism>
<accession>Q82AE4</accession>
<gene>
    <name evidence="1" type="primary">rsmH</name>
    <name type="synonym">mraW</name>
    <name type="ordered locus">SAV_6114</name>
</gene>
<reference key="1">
    <citation type="journal article" date="2001" name="Proc. Natl. Acad. Sci. U.S.A.">
        <title>Genome sequence of an industrial microorganism Streptomyces avermitilis: deducing the ability of producing secondary metabolites.</title>
        <authorList>
            <person name="Omura S."/>
            <person name="Ikeda H."/>
            <person name="Ishikawa J."/>
            <person name="Hanamoto A."/>
            <person name="Takahashi C."/>
            <person name="Shinose M."/>
            <person name="Takahashi Y."/>
            <person name="Horikawa H."/>
            <person name="Nakazawa H."/>
            <person name="Osonoe T."/>
            <person name="Kikuchi H."/>
            <person name="Shiba T."/>
            <person name="Sakaki Y."/>
            <person name="Hattori M."/>
        </authorList>
    </citation>
    <scope>NUCLEOTIDE SEQUENCE [LARGE SCALE GENOMIC DNA]</scope>
    <source>
        <strain>ATCC 31267 / DSM 46492 / JCM 5070 / NBRC 14893 / NCIMB 12804 / NRRL 8165 / MA-4680</strain>
    </source>
</reference>
<reference key="2">
    <citation type="journal article" date="2003" name="Nat. Biotechnol.">
        <title>Complete genome sequence and comparative analysis of the industrial microorganism Streptomyces avermitilis.</title>
        <authorList>
            <person name="Ikeda H."/>
            <person name="Ishikawa J."/>
            <person name="Hanamoto A."/>
            <person name="Shinose M."/>
            <person name="Kikuchi H."/>
            <person name="Shiba T."/>
            <person name="Sakaki Y."/>
            <person name="Hattori M."/>
            <person name="Omura S."/>
        </authorList>
    </citation>
    <scope>NUCLEOTIDE SEQUENCE [LARGE SCALE GENOMIC DNA]</scope>
    <source>
        <strain>ATCC 31267 / DSM 46492 / JCM 5070 / NBRC 14893 / NCIMB 12804 / NRRL 8165 / MA-4680</strain>
    </source>
</reference>
<comment type="function">
    <text evidence="1">Specifically methylates the N4 position of cytidine in position 1402 (C1402) of 16S rRNA.</text>
</comment>
<comment type="catalytic activity">
    <reaction evidence="1">
        <text>cytidine(1402) in 16S rRNA + S-adenosyl-L-methionine = N(4)-methylcytidine(1402) in 16S rRNA + S-adenosyl-L-homocysteine + H(+)</text>
        <dbReference type="Rhea" id="RHEA:42928"/>
        <dbReference type="Rhea" id="RHEA-COMP:10286"/>
        <dbReference type="Rhea" id="RHEA-COMP:10287"/>
        <dbReference type="ChEBI" id="CHEBI:15378"/>
        <dbReference type="ChEBI" id="CHEBI:57856"/>
        <dbReference type="ChEBI" id="CHEBI:59789"/>
        <dbReference type="ChEBI" id="CHEBI:74506"/>
        <dbReference type="ChEBI" id="CHEBI:82748"/>
        <dbReference type="EC" id="2.1.1.199"/>
    </reaction>
</comment>
<comment type="subcellular location">
    <subcellularLocation>
        <location evidence="1">Cytoplasm</location>
    </subcellularLocation>
</comment>
<comment type="similarity">
    <text evidence="1">Belongs to the methyltransferase superfamily. RsmH family.</text>
</comment>
<evidence type="ECO:0000255" key="1">
    <source>
        <dbReference type="HAMAP-Rule" id="MF_01007"/>
    </source>
</evidence>
<evidence type="ECO:0000256" key="2">
    <source>
        <dbReference type="SAM" id="MobiDB-lite"/>
    </source>
</evidence>
<protein>
    <recommendedName>
        <fullName evidence="1">Ribosomal RNA small subunit methyltransferase H</fullName>
        <ecNumber evidence="1">2.1.1.199</ecNumber>
    </recommendedName>
    <alternativeName>
        <fullName evidence="1">16S rRNA m(4)C1402 methyltransferase</fullName>
    </alternativeName>
    <alternativeName>
        <fullName evidence="1">rRNA (cytosine-N(4)-)-methyltransferase RsmH</fullName>
    </alternativeName>
</protein>
<keyword id="KW-0963">Cytoplasm</keyword>
<keyword id="KW-0489">Methyltransferase</keyword>
<keyword id="KW-1185">Reference proteome</keyword>
<keyword id="KW-0698">rRNA processing</keyword>
<keyword id="KW-0949">S-adenosyl-L-methionine</keyword>
<keyword id="KW-0808">Transferase</keyword>
<proteinExistence type="inferred from homology"/>
<dbReference type="EC" id="2.1.1.199" evidence="1"/>
<dbReference type="EMBL" id="BA000030">
    <property type="protein sequence ID" value="BAC73825.1"/>
    <property type="molecule type" value="Genomic_DNA"/>
</dbReference>
<dbReference type="SMR" id="Q82AE4"/>
<dbReference type="KEGG" id="sma:SAVERM_6114"/>
<dbReference type="eggNOG" id="COG0275">
    <property type="taxonomic scope" value="Bacteria"/>
</dbReference>
<dbReference type="HOGENOM" id="CLU_038422_0_0_11"/>
<dbReference type="OrthoDB" id="9806637at2"/>
<dbReference type="Proteomes" id="UP000000428">
    <property type="component" value="Chromosome"/>
</dbReference>
<dbReference type="GO" id="GO:0005737">
    <property type="term" value="C:cytoplasm"/>
    <property type="evidence" value="ECO:0007669"/>
    <property type="project" value="UniProtKB-SubCell"/>
</dbReference>
<dbReference type="GO" id="GO:0071424">
    <property type="term" value="F:rRNA (cytosine-N4-)-methyltransferase activity"/>
    <property type="evidence" value="ECO:0007669"/>
    <property type="project" value="UniProtKB-UniRule"/>
</dbReference>
<dbReference type="GO" id="GO:0070475">
    <property type="term" value="P:rRNA base methylation"/>
    <property type="evidence" value="ECO:0007669"/>
    <property type="project" value="UniProtKB-UniRule"/>
</dbReference>
<dbReference type="FunFam" id="1.10.150.170:FF:000001">
    <property type="entry name" value="Ribosomal RNA small subunit methyltransferase H"/>
    <property type="match status" value="1"/>
</dbReference>
<dbReference type="Gene3D" id="1.10.150.170">
    <property type="entry name" value="Putative methyltransferase TM0872, insert domain"/>
    <property type="match status" value="1"/>
</dbReference>
<dbReference type="Gene3D" id="3.40.50.150">
    <property type="entry name" value="Vaccinia Virus protein VP39"/>
    <property type="match status" value="1"/>
</dbReference>
<dbReference type="HAMAP" id="MF_01007">
    <property type="entry name" value="16SrRNA_methyltr_H"/>
    <property type="match status" value="1"/>
</dbReference>
<dbReference type="InterPro" id="IPR002903">
    <property type="entry name" value="RsmH"/>
</dbReference>
<dbReference type="InterPro" id="IPR023397">
    <property type="entry name" value="SAM-dep_MeTrfase_MraW_recog"/>
</dbReference>
<dbReference type="InterPro" id="IPR029063">
    <property type="entry name" value="SAM-dependent_MTases_sf"/>
</dbReference>
<dbReference type="NCBIfam" id="TIGR00006">
    <property type="entry name" value="16S rRNA (cytosine(1402)-N(4))-methyltransferase RsmH"/>
    <property type="match status" value="1"/>
</dbReference>
<dbReference type="PANTHER" id="PTHR11265:SF0">
    <property type="entry name" value="12S RRNA N4-METHYLCYTIDINE METHYLTRANSFERASE"/>
    <property type="match status" value="1"/>
</dbReference>
<dbReference type="PANTHER" id="PTHR11265">
    <property type="entry name" value="S-ADENOSYL-METHYLTRANSFERASE MRAW"/>
    <property type="match status" value="1"/>
</dbReference>
<dbReference type="Pfam" id="PF01795">
    <property type="entry name" value="Methyltransf_5"/>
    <property type="match status" value="1"/>
</dbReference>
<dbReference type="PIRSF" id="PIRSF004486">
    <property type="entry name" value="MraW"/>
    <property type="match status" value="1"/>
</dbReference>
<dbReference type="SUPFAM" id="SSF81799">
    <property type="entry name" value="Putative methyltransferase TM0872, insert domain"/>
    <property type="match status" value="1"/>
</dbReference>
<dbReference type="SUPFAM" id="SSF53335">
    <property type="entry name" value="S-adenosyl-L-methionine-dependent methyltransferases"/>
    <property type="match status" value="1"/>
</dbReference>
<feature type="chain" id="PRO_0000108716" description="Ribosomal RNA small subunit methyltransferase H">
    <location>
        <begin position="1"/>
        <end position="318"/>
    </location>
</feature>
<feature type="region of interest" description="Disordered" evidence="2">
    <location>
        <begin position="293"/>
        <end position="318"/>
    </location>
</feature>
<feature type="binding site" evidence="1">
    <location>
        <begin position="37"/>
        <end position="39"/>
    </location>
    <ligand>
        <name>S-adenosyl-L-methionine</name>
        <dbReference type="ChEBI" id="CHEBI:59789"/>
    </ligand>
</feature>
<feature type="binding site" evidence="1">
    <location>
        <position position="56"/>
    </location>
    <ligand>
        <name>S-adenosyl-L-methionine</name>
        <dbReference type="ChEBI" id="CHEBI:59789"/>
    </ligand>
</feature>
<feature type="binding site" evidence="1">
    <location>
        <position position="83"/>
    </location>
    <ligand>
        <name>S-adenosyl-L-methionine</name>
        <dbReference type="ChEBI" id="CHEBI:59789"/>
    </ligand>
</feature>
<feature type="binding site" evidence="1">
    <location>
        <position position="104"/>
    </location>
    <ligand>
        <name>S-adenosyl-L-methionine</name>
        <dbReference type="ChEBI" id="CHEBI:59789"/>
    </ligand>
</feature>
<feature type="binding site" evidence="1">
    <location>
        <position position="111"/>
    </location>
    <ligand>
        <name>S-adenosyl-L-methionine</name>
        <dbReference type="ChEBI" id="CHEBI:59789"/>
    </ligand>
</feature>